<comment type="subcellular location">
    <subcellularLocation>
        <location evidence="3">Membrane</location>
        <topology evidence="3">Multi-pass membrane protein</topology>
    </subcellularLocation>
</comment>
<comment type="similarity">
    <text evidence="3">Belongs to the ABC transporter superfamily. ABCA family. CPR flippase (TC 3.A.1.211) subfamily.</text>
</comment>
<comment type="sequence caution" evidence="3">
    <conflict type="erroneous gene model prediction">
        <sequence resource="EMBL-CDS" id="AEE78327"/>
    </conflict>
</comment>
<comment type="sequence caution" evidence="3">
    <conflict type="erroneous gene model prediction">
        <sequence resource="EMBL-CDS" id="CAB41860"/>
    </conflict>
</comment>
<proteinExistence type="inferred from homology"/>
<sequence>MAKPVAASFLTQANALFKKNLTYQKRNIWSNVRLIVIPLYLCVVLVCIQAVFDSLVNNSVDNQCGCRCADDDKNGDGKCEIKSCGLQYSSQNQAVFCAFPNPPPLLPLLHIPPSVNRDSCQRTGSCPVTILVTGNNQSLGTTLSENLLSTSFTVNSSSDLFLRNLAYNVLSTTSETDYTNYRDPGIYSDLPIFNIQPQCTPATILSLSFRQPPLEFHKEVRCVQGLNLWRNNSLEVNDEIFKGFRKENHEEIINEVAAAYDLLNTDRNKFNVTIWYYTTYKGDLQDWRVKYVRVPRSVNMVSNAYLQFLRGPGTKILFDFVKEMPKQETRLRMDMASLIGPIFFTWVILLLFPVILTSLVYEKQQRLRIIMKMHGLGDAPYWMISYAYFLAISTLYIVCLMIFGSAIGLKFFRFNDYTIQFMFYFLYINLQISIAFLVSSAFSKAVTASVVAYIYVFGSGLLGAFLFQFLIESLSFPRRWIFVMELYPGFSLYRGLYEFSQYAFQRNLNGRDGMKWKDFRGSAMDEVFTIIIVEWVVALVATYYIDRVSSSSKDTFAFLKNPFKLSPTPQMLSFQKERSDVSVEMEKLDVIQEKETVKQLIFERSKNHGIVCDNLKKVYQGRDGNPPKLAVCGLSLAVPSGECFGMLGPNGAGKTSFINMMTGLVKPSSGSAFVQGLDICKDMDKVYISMGVCPQHDLLWETLTGKEHLLFYGRLKNLKGHDLNQAVEESLKSVNLFHGGVADIPAGKYSGGMKRRLSVAISLIGSPKVVYMDEPSTGLDPASRINLWTVIKRAKKHAAIILTTHSMEEAEFLCDRLGIFVDGRLQCIGNPKELKGRYGGSYVLTITTSPEHEKDVETLVQEVSSNARKIYHIAGTQKFEFPKEEVRISEVFQAVENAKRNFTVFAWGFADTTLEDVFIKVAKTGL</sequence>
<gene>
    <name type="primary">ABCA6</name>
    <name type="synonym">ATH5</name>
    <name type="ordered locus">At3g47770</name>
    <name type="ORF">T23J7.100</name>
</gene>
<accession>Q9STT6</accession>
<accession>F4JCP5</accession>
<evidence type="ECO:0000255" key="1"/>
<evidence type="ECO:0000255" key="2">
    <source>
        <dbReference type="PROSITE-ProRule" id="PRU00434"/>
    </source>
</evidence>
<evidence type="ECO:0000305" key="3"/>
<feature type="chain" id="PRO_0000240327" description="ABC transporter A family member 6">
    <location>
        <begin position="1"/>
        <end position="926"/>
    </location>
</feature>
<feature type="transmembrane region" description="Helical" evidence="1">
    <location>
        <begin position="34"/>
        <end position="54"/>
    </location>
</feature>
<feature type="transmembrane region" description="Helical" evidence="1">
    <location>
        <begin position="336"/>
        <end position="356"/>
    </location>
</feature>
<feature type="transmembrane region" description="Helical" evidence="1">
    <location>
        <begin position="389"/>
        <end position="409"/>
    </location>
</feature>
<feature type="transmembrane region" description="Helical" evidence="1">
    <location>
        <begin position="418"/>
        <end position="438"/>
    </location>
</feature>
<feature type="transmembrane region" description="Helical" evidence="1">
    <location>
        <begin position="451"/>
        <end position="471"/>
    </location>
</feature>
<feature type="transmembrane region" description="Helical" evidence="1">
    <location>
        <begin position="525"/>
        <end position="545"/>
    </location>
</feature>
<feature type="domain" description="ABC transporter" evidence="2">
    <location>
        <begin position="610"/>
        <end position="847"/>
    </location>
</feature>
<feature type="binding site" evidence="2">
    <location>
        <begin position="648"/>
        <end position="655"/>
    </location>
    <ligand>
        <name>ATP</name>
        <dbReference type="ChEBI" id="CHEBI:30616"/>
    </ligand>
</feature>
<dbReference type="EMBL" id="AL049746">
    <property type="protein sequence ID" value="CAB41860.1"/>
    <property type="status" value="ALT_SEQ"/>
    <property type="molecule type" value="Genomic_DNA"/>
</dbReference>
<dbReference type="EMBL" id="CP002686">
    <property type="protein sequence ID" value="AEE78327.1"/>
    <property type="status" value="ALT_SEQ"/>
    <property type="molecule type" value="Genomic_DNA"/>
</dbReference>
<dbReference type="EMBL" id="CP002686">
    <property type="protein sequence ID" value="ANM65245.1"/>
    <property type="molecule type" value="Genomic_DNA"/>
</dbReference>
<dbReference type="PIR" id="T07716">
    <property type="entry name" value="T07716"/>
</dbReference>
<dbReference type="RefSeq" id="NP_001327229.1">
    <property type="nucleotide sequence ID" value="NM_001339335.1"/>
</dbReference>
<dbReference type="RefSeq" id="NP_190361.2">
    <property type="nucleotide sequence ID" value="NM_114645.3"/>
</dbReference>
<dbReference type="SMR" id="Q9STT6"/>
<dbReference type="FunCoup" id="Q9STT6">
    <property type="interactions" value="7"/>
</dbReference>
<dbReference type="STRING" id="3702.Q9STT6"/>
<dbReference type="GlyGen" id="Q9STT6">
    <property type="glycosylation" value="1 site"/>
</dbReference>
<dbReference type="PaxDb" id="3702-AT3G47770.1"/>
<dbReference type="EnsemblPlants" id="AT3G47770.2">
    <property type="protein sequence ID" value="AT3G47770.2"/>
    <property type="gene ID" value="AT3G47770"/>
</dbReference>
<dbReference type="GeneID" id="823931"/>
<dbReference type="Gramene" id="AT3G47770.2">
    <property type="protein sequence ID" value="AT3G47770.2"/>
    <property type="gene ID" value="AT3G47770"/>
</dbReference>
<dbReference type="KEGG" id="ath:AT3G47770"/>
<dbReference type="Araport" id="AT3G47770"/>
<dbReference type="TAIR" id="AT3G47770">
    <property type="gene designation" value="ABCA6"/>
</dbReference>
<dbReference type="eggNOG" id="KOG0059">
    <property type="taxonomic scope" value="Eukaryota"/>
</dbReference>
<dbReference type="InParanoid" id="Q9STT6"/>
<dbReference type="PhylomeDB" id="Q9STT6"/>
<dbReference type="PRO" id="PR:Q9STT6"/>
<dbReference type="Proteomes" id="UP000006548">
    <property type="component" value="Chromosome 3"/>
</dbReference>
<dbReference type="ExpressionAtlas" id="Q9STT6">
    <property type="expression patterns" value="baseline and differential"/>
</dbReference>
<dbReference type="GO" id="GO:0016020">
    <property type="term" value="C:membrane"/>
    <property type="evidence" value="ECO:0007669"/>
    <property type="project" value="UniProtKB-SubCell"/>
</dbReference>
<dbReference type="GO" id="GO:0140359">
    <property type="term" value="F:ABC-type transporter activity"/>
    <property type="evidence" value="ECO:0007669"/>
    <property type="project" value="InterPro"/>
</dbReference>
<dbReference type="GO" id="GO:0005524">
    <property type="term" value="F:ATP binding"/>
    <property type="evidence" value="ECO:0007669"/>
    <property type="project" value="UniProtKB-KW"/>
</dbReference>
<dbReference type="GO" id="GO:0016887">
    <property type="term" value="F:ATP hydrolysis activity"/>
    <property type="evidence" value="ECO:0007669"/>
    <property type="project" value="InterPro"/>
</dbReference>
<dbReference type="CDD" id="cd03263">
    <property type="entry name" value="ABC_subfamily_A"/>
    <property type="match status" value="1"/>
</dbReference>
<dbReference type="FunFam" id="3.40.50.300:FF:000633">
    <property type="entry name" value="ABC transporter A family member 7"/>
    <property type="match status" value="1"/>
</dbReference>
<dbReference type="Gene3D" id="3.40.50.300">
    <property type="entry name" value="P-loop containing nucleotide triphosphate hydrolases"/>
    <property type="match status" value="1"/>
</dbReference>
<dbReference type="InterPro" id="IPR003593">
    <property type="entry name" value="AAA+_ATPase"/>
</dbReference>
<dbReference type="InterPro" id="IPR013525">
    <property type="entry name" value="ABC2_TM"/>
</dbReference>
<dbReference type="InterPro" id="IPR003439">
    <property type="entry name" value="ABC_transporter-like_ATP-bd"/>
</dbReference>
<dbReference type="InterPro" id="IPR017871">
    <property type="entry name" value="ABC_transporter-like_CS"/>
</dbReference>
<dbReference type="InterPro" id="IPR026082">
    <property type="entry name" value="ABCA"/>
</dbReference>
<dbReference type="InterPro" id="IPR027417">
    <property type="entry name" value="P-loop_NTPase"/>
</dbReference>
<dbReference type="PANTHER" id="PTHR19229:SF154">
    <property type="entry name" value="ABC TRANSPORTER A FAMILY MEMBER 3-RELATED"/>
    <property type="match status" value="1"/>
</dbReference>
<dbReference type="PANTHER" id="PTHR19229">
    <property type="entry name" value="ATP-BINDING CASSETTE TRANSPORTER SUBFAMILY A ABCA"/>
    <property type="match status" value="1"/>
</dbReference>
<dbReference type="Pfam" id="PF12698">
    <property type="entry name" value="ABC2_membrane_3"/>
    <property type="match status" value="1"/>
</dbReference>
<dbReference type="Pfam" id="PF00005">
    <property type="entry name" value="ABC_tran"/>
    <property type="match status" value="1"/>
</dbReference>
<dbReference type="Pfam" id="PF24526">
    <property type="entry name" value="ABCA12_C"/>
    <property type="match status" value="1"/>
</dbReference>
<dbReference type="SMART" id="SM00382">
    <property type="entry name" value="AAA"/>
    <property type="match status" value="1"/>
</dbReference>
<dbReference type="SUPFAM" id="SSF52540">
    <property type="entry name" value="P-loop containing nucleoside triphosphate hydrolases"/>
    <property type="match status" value="1"/>
</dbReference>
<dbReference type="PROSITE" id="PS00211">
    <property type="entry name" value="ABC_TRANSPORTER_1"/>
    <property type="match status" value="1"/>
</dbReference>
<dbReference type="PROSITE" id="PS50893">
    <property type="entry name" value="ABC_TRANSPORTER_2"/>
    <property type="match status" value="1"/>
</dbReference>
<protein>
    <recommendedName>
        <fullName>ABC transporter A family member 6</fullName>
        <shortName>ABC transporter ABCA.6</shortName>
        <shortName>AtABCA6</shortName>
    </recommendedName>
    <alternativeName>
        <fullName>Putative ABC2 homolog 5</fullName>
    </alternativeName>
</protein>
<organism>
    <name type="scientific">Arabidopsis thaliana</name>
    <name type="common">Mouse-ear cress</name>
    <dbReference type="NCBI Taxonomy" id="3702"/>
    <lineage>
        <taxon>Eukaryota</taxon>
        <taxon>Viridiplantae</taxon>
        <taxon>Streptophyta</taxon>
        <taxon>Embryophyta</taxon>
        <taxon>Tracheophyta</taxon>
        <taxon>Spermatophyta</taxon>
        <taxon>Magnoliopsida</taxon>
        <taxon>eudicotyledons</taxon>
        <taxon>Gunneridae</taxon>
        <taxon>Pentapetalae</taxon>
        <taxon>rosids</taxon>
        <taxon>malvids</taxon>
        <taxon>Brassicales</taxon>
        <taxon>Brassicaceae</taxon>
        <taxon>Camelineae</taxon>
        <taxon>Arabidopsis</taxon>
    </lineage>
</organism>
<name>AB6A_ARATH</name>
<keyword id="KW-0067">ATP-binding</keyword>
<keyword id="KW-0472">Membrane</keyword>
<keyword id="KW-0547">Nucleotide-binding</keyword>
<keyword id="KW-1185">Reference proteome</keyword>
<keyword id="KW-0812">Transmembrane</keyword>
<keyword id="KW-1133">Transmembrane helix</keyword>
<keyword id="KW-0813">Transport</keyword>
<reference key="1">
    <citation type="journal article" date="2000" name="Nature">
        <title>Sequence and analysis of chromosome 3 of the plant Arabidopsis thaliana.</title>
        <authorList>
            <person name="Salanoubat M."/>
            <person name="Lemcke K."/>
            <person name="Rieger M."/>
            <person name="Ansorge W."/>
            <person name="Unseld M."/>
            <person name="Fartmann B."/>
            <person name="Valle G."/>
            <person name="Bloecker H."/>
            <person name="Perez-Alonso M."/>
            <person name="Obermaier B."/>
            <person name="Delseny M."/>
            <person name="Boutry M."/>
            <person name="Grivell L.A."/>
            <person name="Mache R."/>
            <person name="Puigdomenech P."/>
            <person name="De Simone V."/>
            <person name="Choisne N."/>
            <person name="Artiguenave F."/>
            <person name="Robert C."/>
            <person name="Brottier P."/>
            <person name="Wincker P."/>
            <person name="Cattolico L."/>
            <person name="Weissenbach J."/>
            <person name="Saurin W."/>
            <person name="Quetier F."/>
            <person name="Schaefer M."/>
            <person name="Mueller-Auer S."/>
            <person name="Gabel C."/>
            <person name="Fuchs M."/>
            <person name="Benes V."/>
            <person name="Wurmbach E."/>
            <person name="Drzonek H."/>
            <person name="Erfle H."/>
            <person name="Jordan N."/>
            <person name="Bangert S."/>
            <person name="Wiedelmann R."/>
            <person name="Kranz H."/>
            <person name="Voss H."/>
            <person name="Holland R."/>
            <person name="Brandt P."/>
            <person name="Nyakatura G."/>
            <person name="Vezzi A."/>
            <person name="D'Angelo M."/>
            <person name="Pallavicini A."/>
            <person name="Toppo S."/>
            <person name="Simionati B."/>
            <person name="Conrad A."/>
            <person name="Hornischer K."/>
            <person name="Kauer G."/>
            <person name="Loehnert T.-H."/>
            <person name="Nordsiek G."/>
            <person name="Reichelt J."/>
            <person name="Scharfe M."/>
            <person name="Schoen O."/>
            <person name="Bargues M."/>
            <person name="Terol J."/>
            <person name="Climent J."/>
            <person name="Navarro P."/>
            <person name="Collado C."/>
            <person name="Perez-Perez A."/>
            <person name="Ottenwaelder B."/>
            <person name="Duchemin D."/>
            <person name="Cooke R."/>
            <person name="Laudie M."/>
            <person name="Berger-Llauro C."/>
            <person name="Purnelle B."/>
            <person name="Masuy D."/>
            <person name="de Haan M."/>
            <person name="Maarse A.C."/>
            <person name="Alcaraz J.-P."/>
            <person name="Cottet A."/>
            <person name="Casacuberta E."/>
            <person name="Monfort A."/>
            <person name="Argiriou A."/>
            <person name="Flores M."/>
            <person name="Liguori R."/>
            <person name="Vitale D."/>
            <person name="Mannhaupt G."/>
            <person name="Haase D."/>
            <person name="Schoof H."/>
            <person name="Rudd S."/>
            <person name="Zaccaria P."/>
            <person name="Mewes H.-W."/>
            <person name="Mayer K.F.X."/>
            <person name="Kaul S."/>
            <person name="Town C.D."/>
            <person name="Koo H.L."/>
            <person name="Tallon L.J."/>
            <person name="Jenkins J."/>
            <person name="Rooney T."/>
            <person name="Rizzo M."/>
            <person name="Walts A."/>
            <person name="Utterback T."/>
            <person name="Fujii C.Y."/>
            <person name="Shea T.P."/>
            <person name="Creasy T.H."/>
            <person name="Haas B."/>
            <person name="Maiti R."/>
            <person name="Wu D."/>
            <person name="Peterson J."/>
            <person name="Van Aken S."/>
            <person name="Pai G."/>
            <person name="Militscher J."/>
            <person name="Sellers P."/>
            <person name="Gill J.E."/>
            <person name="Feldblyum T.V."/>
            <person name="Preuss D."/>
            <person name="Lin X."/>
            <person name="Nierman W.C."/>
            <person name="Salzberg S.L."/>
            <person name="White O."/>
            <person name="Venter J.C."/>
            <person name="Fraser C.M."/>
            <person name="Kaneko T."/>
            <person name="Nakamura Y."/>
            <person name="Sato S."/>
            <person name="Kato T."/>
            <person name="Asamizu E."/>
            <person name="Sasamoto S."/>
            <person name="Kimura T."/>
            <person name="Idesawa K."/>
            <person name="Kawashima K."/>
            <person name="Kishida Y."/>
            <person name="Kiyokawa C."/>
            <person name="Kohara M."/>
            <person name="Matsumoto M."/>
            <person name="Matsuno A."/>
            <person name="Muraki A."/>
            <person name="Nakayama S."/>
            <person name="Nakazaki N."/>
            <person name="Shinpo S."/>
            <person name="Takeuchi C."/>
            <person name="Wada T."/>
            <person name="Watanabe A."/>
            <person name="Yamada M."/>
            <person name="Yasuda M."/>
            <person name="Tabata S."/>
        </authorList>
    </citation>
    <scope>NUCLEOTIDE SEQUENCE [LARGE SCALE GENOMIC DNA]</scope>
    <source>
        <strain>cv. Columbia</strain>
    </source>
</reference>
<reference key="2">
    <citation type="journal article" date="2017" name="Plant J.">
        <title>Araport11: a complete reannotation of the Arabidopsis thaliana reference genome.</title>
        <authorList>
            <person name="Cheng C.Y."/>
            <person name="Krishnakumar V."/>
            <person name="Chan A.P."/>
            <person name="Thibaud-Nissen F."/>
            <person name="Schobel S."/>
            <person name="Town C.D."/>
        </authorList>
    </citation>
    <scope>GENOME REANNOTATION</scope>
    <source>
        <strain>cv. Columbia</strain>
    </source>
</reference>
<reference key="3">
    <citation type="journal article" date="2001" name="J. Biol. Chem.">
        <title>The Arabidopsis thaliana ABC protein superfamily, a complete inventory.</title>
        <authorList>
            <person name="Sanchez-Fernandez R."/>
            <person name="Davies T.G."/>
            <person name="Coleman J.O."/>
            <person name="Rea P.A."/>
        </authorList>
    </citation>
    <scope>GENE FAMILY</scope>
    <scope>NOMENCLATURE</scope>
</reference>
<reference key="4">
    <citation type="journal article" date="2008" name="Trends Plant Sci.">
        <title>Plant ABC proteins - a unified nomenclature and updated inventory.</title>
        <authorList>
            <person name="Verrier P.J."/>
            <person name="Bird D."/>
            <person name="Burla B."/>
            <person name="Dassa E."/>
            <person name="Forestier C."/>
            <person name="Geisler M."/>
            <person name="Klein M."/>
            <person name="Kolukisaoglu H.U."/>
            <person name="Lee Y."/>
            <person name="Martinoia E."/>
            <person name="Murphy A."/>
            <person name="Rea P.A."/>
            <person name="Samuels L."/>
            <person name="Schulz B."/>
            <person name="Spalding E.J."/>
            <person name="Yazaki K."/>
            <person name="Theodoulou F.L."/>
        </authorList>
    </citation>
    <scope>GENE FAMILY</scope>
    <scope>NOMENCLATURE</scope>
</reference>